<gene>
    <name evidence="1" type="primary">mnmE</name>
    <name evidence="1" type="synonym">trmE</name>
    <name type="ordered locus">SPD_0902</name>
</gene>
<reference key="1">
    <citation type="journal article" date="2007" name="J. Bacteriol.">
        <title>Genome sequence of Avery's virulent serotype 2 strain D39 of Streptococcus pneumoniae and comparison with that of unencapsulated laboratory strain R6.</title>
        <authorList>
            <person name="Lanie J.A."/>
            <person name="Ng W.-L."/>
            <person name="Kazmierczak K.M."/>
            <person name="Andrzejewski T.M."/>
            <person name="Davidsen T.M."/>
            <person name="Wayne K.J."/>
            <person name="Tettelin H."/>
            <person name="Glass J.I."/>
            <person name="Winkler M.E."/>
        </authorList>
    </citation>
    <scope>NUCLEOTIDE SEQUENCE [LARGE SCALE GENOMIC DNA]</scope>
    <source>
        <strain>D39 / NCTC 7466</strain>
    </source>
</reference>
<accession>Q04KR8</accession>
<feature type="chain" id="PRO_1000048886" description="tRNA modification GTPase MnmE">
    <location>
        <begin position="1"/>
        <end position="457"/>
    </location>
</feature>
<feature type="domain" description="TrmE-type G">
    <location>
        <begin position="223"/>
        <end position="377"/>
    </location>
</feature>
<feature type="binding site" evidence="1">
    <location>
        <position position="25"/>
    </location>
    <ligand>
        <name>(6S)-5-formyl-5,6,7,8-tetrahydrofolate</name>
        <dbReference type="ChEBI" id="CHEBI:57457"/>
    </ligand>
</feature>
<feature type="binding site" evidence="1">
    <location>
        <position position="87"/>
    </location>
    <ligand>
        <name>(6S)-5-formyl-5,6,7,8-tetrahydrofolate</name>
        <dbReference type="ChEBI" id="CHEBI:57457"/>
    </ligand>
</feature>
<feature type="binding site" evidence="1">
    <location>
        <position position="126"/>
    </location>
    <ligand>
        <name>(6S)-5-formyl-5,6,7,8-tetrahydrofolate</name>
        <dbReference type="ChEBI" id="CHEBI:57457"/>
    </ligand>
</feature>
<feature type="binding site" evidence="1">
    <location>
        <begin position="233"/>
        <end position="238"/>
    </location>
    <ligand>
        <name>GTP</name>
        <dbReference type="ChEBI" id="CHEBI:37565"/>
    </ligand>
</feature>
<feature type="binding site" evidence="1">
    <location>
        <position position="233"/>
    </location>
    <ligand>
        <name>K(+)</name>
        <dbReference type="ChEBI" id="CHEBI:29103"/>
    </ligand>
</feature>
<feature type="binding site" evidence="1">
    <location>
        <position position="237"/>
    </location>
    <ligand>
        <name>Mg(2+)</name>
        <dbReference type="ChEBI" id="CHEBI:18420"/>
    </ligand>
</feature>
<feature type="binding site" evidence="1">
    <location>
        <begin position="252"/>
        <end position="258"/>
    </location>
    <ligand>
        <name>GTP</name>
        <dbReference type="ChEBI" id="CHEBI:37565"/>
    </ligand>
</feature>
<feature type="binding site" evidence="1">
    <location>
        <position position="252"/>
    </location>
    <ligand>
        <name>K(+)</name>
        <dbReference type="ChEBI" id="CHEBI:29103"/>
    </ligand>
</feature>
<feature type="binding site" evidence="1">
    <location>
        <position position="254"/>
    </location>
    <ligand>
        <name>K(+)</name>
        <dbReference type="ChEBI" id="CHEBI:29103"/>
    </ligand>
</feature>
<feature type="binding site" evidence="1">
    <location>
        <position position="257"/>
    </location>
    <ligand>
        <name>K(+)</name>
        <dbReference type="ChEBI" id="CHEBI:29103"/>
    </ligand>
</feature>
<feature type="binding site" evidence="1">
    <location>
        <position position="258"/>
    </location>
    <ligand>
        <name>Mg(2+)</name>
        <dbReference type="ChEBI" id="CHEBI:18420"/>
    </ligand>
</feature>
<feature type="binding site" evidence="1">
    <location>
        <begin position="277"/>
        <end position="280"/>
    </location>
    <ligand>
        <name>GTP</name>
        <dbReference type="ChEBI" id="CHEBI:37565"/>
    </ligand>
</feature>
<feature type="binding site" evidence="1">
    <location>
        <position position="457"/>
    </location>
    <ligand>
        <name>(6S)-5-formyl-5,6,7,8-tetrahydrofolate</name>
        <dbReference type="ChEBI" id="CHEBI:57457"/>
    </ligand>
</feature>
<sequence length="457" mass="50534">MITREFDTIAAISTPLGEGAIGIVRLSGTDSFAIAQKIFKGKDLNKVASHTLNYGHIIDPLTGKVMDEVMVGAMKSPKTFTREDIIEINTHGGIAVTNEILQLAIREGARLAEPGEFTKRAFLNGRVDLTQAEAVMDIIRAKTDKAMNIAVKQLDGSLSDLINNTRQEILNTLAQVEVNIDYPEYDDVEEATTAVVREKTMEFEQLLTKLLRTARRGKILREGISTAIIGRPNVGKSSLLNNLLREDKAIVTDIAGTTRDVIEEYVNINGVPLKLIDTAGIRETDDIVEQIGVERSKKALKEADLVLLVLNASEPLTAQDRQLLEISQDTNRIILLNKTDLPETIETSKLPEDVIRISVLKNQNIDKIEERINNLFFENAGLVEQDATYLSNARHISLIEKAVESLQAVNQGLELGMPVDLLQVDLTRTWEILGEITGDATPDELITQLFSQFCLGK</sequence>
<name>MNME_STRP2</name>
<evidence type="ECO:0000255" key="1">
    <source>
        <dbReference type="HAMAP-Rule" id="MF_00379"/>
    </source>
</evidence>
<keyword id="KW-0963">Cytoplasm</keyword>
<keyword id="KW-0342">GTP-binding</keyword>
<keyword id="KW-0378">Hydrolase</keyword>
<keyword id="KW-0460">Magnesium</keyword>
<keyword id="KW-0479">Metal-binding</keyword>
<keyword id="KW-0547">Nucleotide-binding</keyword>
<keyword id="KW-0630">Potassium</keyword>
<keyword id="KW-1185">Reference proteome</keyword>
<keyword id="KW-0819">tRNA processing</keyword>
<proteinExistence type="inferred from homology"/>
<organism>
    <name type="scientific">Streptococcus pneumoniae serotype 2 (strain D39 / NCTC 7466)</name>
    <dbReference type="NCBI Taxonomy" id="373153"/>
    <lineage>
        <taxon>Bacteria</taxon>
        <taxon>Bacillati</taxon>
        <taxon>Bacillota</taxon>
        <taxon>Bacilli</taxon>
        <taxon>Lactobacillales</taxon>
        <taxon>Streptococcaceae</taxon>
        <taxon>Streptococcus</taxon>
    </lineage>
</organism>
<comment type="function">
    <text evidence="1">Exhibits a very high intrinsic GTPase hydrolysis rate. Involved in the addition of a carboxymethylaminomethyl (cmnm) group at the wobble position (U34) of certain tRNAs, forming tRNA-cmnm(5)s(2)U34.</text>
</comment>
<comment type="cofactor">
    <cofactor evidence="1">
        <name>K(+)</name>
        <dbReference type="ChEBI" id="CHEBI:29103"/>
    </cofactor>
    <text evidence="1">Binds 1 potassium ion per subunit.</text>
</comment>
<comment type="subunit">
    <text evidence="1">Homodimer. Heterotetramer of two MnmE and two MnmG subunits.</text>
</comment>
<comment type="subcellular location">
    <subcellularLocation>
        <location evidence="1">Cytoplasm</location>
    </subcellularLocation>
</comment>
<comment type="similarity">
    <text evidence="1">Belongs to the TRAFAC class TrmE-Era-EngA-EngB-Septin-like GTPase superfamily. TrmE GTPase family.</text>
</comment>
<dbReference type="EC" id="3.6.-.-" evidence="1"/>
<dbReference type="EMBL" id="CP000410">
    <property type="protein sequence ID" value="ABJ55144.1"/>
    <property type="molecule type" value="Genomic_DNA"/>
</dbReference>
<dbReference type="RefSeq" id="WP_000632720.1">
    <property type="nucleotide sequence ID" value="NZ_JAMLJR010000011.1"/>
</dbReference>
<dbReference type="SMR" id="Q04KR8"/>
<dbReference type="PaxDb" id="373153-SPD_0902"/>
<dbReference type="KEGG" id="spd:SPD_0902"/>
<dbReference type="eggNOG" id="COG0486">
    <property type="taxonomic scope" value="Bacteria"/>
</dbReference>
<dbReference type="HOGENOM" id="CLU_019624_4_1_9"/>
<dbReference type="BioCyc" id="SPNE373153:G1G6V-989-MONOMER"/>
<dbReference type="Proteomes" id="UP000001452">
    <property type="component" value="Chromosome"/>
</dbReference>
<dbReference type="GO" id="GO:0005829">
    <property type="term" value="C:cytosol"/>
    <property type="evidence" value="ECO:0007669"/>
    <property type="project" value="TreeGrafter"/>
</dbReference>
<dbReference type="GO" id="GO:0005525">
    <property type="term" value="F:GTP binding"/>
    <property type="evidence" value="ECO:0007669"/>
    <property type="project" value="UniProtKB-UniRule"/>
</dbReference>
<dbReference type="GO" id="GO:0003924">
    <property type="term" value="F:GTPase activity"/>
    <property type="evidence" value="ECO:0007669"/>
    <property type="project" value="UniProtKB-UniRule"/>
</dbReference>
<dbReference type="GO" id="GO:0046872">
    <property type="term" value="F:metal ion binding"/>
    <property type="evidence" value="ECO:0007669"/>
    <property type="project" value="UniProtKB-KW"/>
</dbReference>
<dbReference type="GO" id="GO:0030488">
    <property type="term" value="P:tRNA methylation"/>
    <property type="evidence" value="ECO:0007669"/>
    <property type="project" value="TreeGrafter"/>
</dbReference>
<dbReference type="GO" id="GO:0002098">
    <property type="term" value="P:tRNA wobble uridine modification"/>
    <property type="evidence" value="ECO:0007669"/>
    <property type="project" value="TreeGrafter"/>
</dbReference>
<dbReference type="CDD" id="cd04164">
    <property type="entry name" value="trmE"/>
    <property type="match status" value="1"/>
</dbReference>
<dbReference type="CDD" id="cd14858">
    <property type="entry name" value="TrmE_N"/>
    <property type="match status" value="1"/>
</dbReference>
<dbReference type="FunFam" id="3.30.1360.120:FF:000003">
    <property type="entry name" value="tRNA modification GTPase MnmE"/>
    <property type="match status" value="1"/>
</dbReference>
<dbReference type="FunFam" id="3.40.50.300:FF:000494">
    <property type="entry name" value="tRNA modification GTPase MnmE"/>
    <property type="match status" value="1"/>
</dbReference>
<dbReference type="Gene3D" id="3.40.50.300">
    <property type="entry name" value="P-loop containing nucleotide triphosphate hydrolases"/>
    <property type="match status" value="1"/>
</dbReference>
<dbReference type="Gene3D" id="3.30.1360.120">
    <property type="entry name" value="Probable tRNA modification gtpase trme, domain 1"/>
    <property type="match status" value="1"/>
</dbReference>
<dbReference type="Gene3D" id="1.20.120.430">
    <property type="entry name" value="tRNA modification GTPase MnmE domain 2"/>
    <property type="match status" value="1"/>
</dbReference>
<dbReference type="HAMAP" id="MF_00379">
    <property type="entry name" value="GTPase_MnmE"/>
    <property type="match status" value="1"/>
</dbReference>
<dbReference type="InterPro" id="IPR031168">
    <property type="entry name" value="G_TrmE"/>
</dbReference>
<dbReference type="InterPro" id="IPR006073">
    <property type="entry name" value="GTP-bd"/>
</dbReference>
<dbReference type="InterPro" id="IPR018948">
    <property type="entry name" value="GTP-bd_TrmE_N"/>
</dbReference>
<dbReference type="InterPro" id="IPR004520">
    <property type="entry name" value="GTPase_MnmE"/>
</dbReference>
<dbReference type="InterPro" id="IPR027368">
    <property type="entry name" value="MnmE_dom2"/>
</dbReference>
<dbReference type="InterPro" id="IPR025867">
    <property type="entry name" value="MnmE_helical"/>
</dbReference>
<dbReference type="InterPro" id="IPR027417">
    <property type="entry name" value="P-loop_NTPase"/>
</dbReference>
<dbReference type="InterPro" id="IPR005225">
    <property type="entry name" value="Small_GTP-bd"/>
</dbReference>
<dbReference type="InterPro" id="IPR027266">
    <property type="entry name" value="TrmE/GcvT_dom1"/>
</dbReference>
<dbReference type="NCBIfam" id="TIGR00450">
    <property type="entry name" value="mnmE_trmE_thdF"/>
    <property type="match status" value="1"/>
</dbReference>
<dbReference type="NCBIfam" id="NF003661">
    <property type="entry name" value="PRK05291.1-3"/>
    <property type="match status" value="1"/>
</dbReference>
<dbReference type="NCBIfam" id="TIGR00231">
    <property type="entry name" value="small_GTP"/>
    <property type="match status" value="1"/>
</dbReference>
<dbReference type="PANTHER" id="PTHR42714">
    <property type="entry name" value="TRNA MODIFICATION GTPASE GTPBP3"/>
    <property type="match status" value="1"/>
</dbReference>
<dbReference type="PANTHER" id="PTHR42714:SF2">
    <property type="entry name" value="TRNA MODIFICATION GTPASE GTPBP3, MITOCHONDRIAL"/>
    <property type="match status" value="1"/>
</dbReference>
<dbReference type="Pfam" id="PF01926">
    <property type="entry name" value="MMR_HSR1"/>
    <property type="match status" value="1"/>
</dbReference>
<dbReference type="Pfam" id="PF12631">
    <property type="entry name" value="MnmE_helical"/>
    <property type="match status" value="1"/>
</dbReference>
<dbReference type="Pfam" id="PF10396">
    <property type="entry name" value="TrmE_N"/>
    <property type="match status" value="1"/>
</dbReference>
<dbReference type="SUPFAM" id="SSF52540">
    <property type="entry name" value="P-loop containing nucleoside triphosphate hydrolases"/>
    <property type="match status" value="1"/>
</dbReference>
<dbReference type="SUPFAM" id="SSF116878">
    <property type="entry name" value="TrmE connector domain"/>
    <property type="match status" value="1"/>
</dbReference>
<dbReference type="PROSITE" id="PS51709">
    <property type="entry name" value="G_TRME"/>
    <property type="match status" value="1"/>
</dbReference>
<protein>
    <recommendedName>
        <fullName evidence="1">tRNA modification GTPase MnmE</fullName>
        <ecNumber evidence="1">3.6.-.-</ecNumber>
    </recommendedName>
</protein>